<feature type="chain" id="PRO_1000006612" description="Cysteine--tRNA ligase">
    <location>
        <begin position="1"/>
        <end position="461"/>
    </location>
</feature>
<feature type="short sequence motif" description="'HIGH' region">
    <location>
        <begin position="32"/>
        <end position="42"/>
    </location>
</feature>
<feature type="short sequence motif" description="'KMSKS' region">
    <location>
        <begin position="268"/>
        <end position="272"/>
    </location>
</feature>
<feature type="binding site" evidence="1">
    <location>
        <position position="30"/>
    </location>
    <ligand>
        <name>Zn(2+)</name>
        <dbReference type="ChEBI" id="CHEBI:29105"/>
    </ligand>
</feature>
<feature type="binding site" evidence="1">
    <location>
        <position position="211"/>
    </location>
    <ligand>
        <name>Zn(2+)</name>
        <dbReference type="ChEBI" id="CHEBI:29105"/>
    </ligand>
</feature>
<feature type="binding site" evidence="1">
    <location>
        <position position="236"/>
    </location>
    <ligand>
        <name>Zn(2+)</name>
        <dbReference type="ChEBI" id="CHEBI:29105"/>
    </ligand>
</feature>
<feature type="binding site" evidence="1">
    <location>
        <position position="240"/>
    </location>
    <ligand>
        <name>Zn(2+)</name>
        <dbReference type="ChEBI" id="CHEBI:29105"/>
    </ligand>
</feature>
<feature type="binding site" evidence="1">
    <location>
        <position position="271"/>
    </location>
    <ligand>
        <name>ATP</name>
        <dbReference type="ChEBI" id="CHEBI:30616"/>
    </ligand>
</feature>
<dbReference type="EC" id="6.1.1.16" evidence="1"/>
<dbReference type="EMBL" id="CP000503">
    <property type="protein sequence ID" value="ABM25437.1"/>
    <property type="molecule type" value="Genomic_DNA"/>
</dbReference>
<dbReference type="SMR" id="A1RL92"/>
<dbReference type="KEGG" id="shw:Sputw3181_2614"/>
<dbReference type="HOGENOM" id="CLU_013528_0_1_6"/>
<dbReference type="Proteomes" id="UP000002597">
    <property type="component" value="Chromosome"/>
</dbReference>
<dbReference type="GO" id="GO:0005829">
    <property type="term" value="C:cytosol"/>
    <property type="evidence" value="ECO:0007669"/>
    <property type="project" value="TreeGrafter"/>
</dbReference>
<dbReference type="GO" id="GO:0005524">
    <property type="term" value="F:ATP binding"/>
    <property type="evidence" value="ECO:0007669"/>
    <property type="project" value="UniProtKB-UniRule"/>
</dbReference>
<dbReference type="GO" id="GO:0004817">
    <property type="term" value="F:cysteine-tRNA ligase activity"/>
    <property type="evidence" value="ECO:0007669"/>
    <property type="project" value="UniProtKB-UniRule"/>
</dbReference>
<dbReference type="GO" id="GO:0008270">
    <property type="term" value="F:zinc ion binding"/>
    <property type="evidence" value="ECO:0007669"/>
    <property type="project" value="UniProtKB-UniRule"/>
</dbReference>
<dbReference type="GO" id="GO:0006423">
    <property type="term" value="P:cysteinyl-tRNA aminoacylation"/>
    <property type="evidence" value="ECO:0007669"/>
    <property type="project" value="UniProtKB-UniRule"/>
</dbReference>
<dbReference type="CDD" id="cd07963">
    <property type="entry name" value="Anticodon_Ia_Cys"/>
    <property type="match status" value="1"/>
</dbReference>
<dbReference type="CDD" id="cd00672">
    <property type="entry name" value="CysRS_core"/>
    <property type="match status" value="1"/>
</dbReference>
<dbReference type="FunFam" id="1.20.120.1910:FF:000001">
    <property type="entry name" value="Cysteine--tRNA ligase"/>
    <property type="match status" value="1"/>
</dbReference>
<dbReference type="FunFam" id="3.40.50.620:FF:000009">
    <property type="entry name" value="Cysteine--tRNA ligase"/>
    <property type="match status" value="1"/>
</dbReference>
<dbReference type="Gene3D" id="1.20.120.1910">
    <property type="entry name" value="Cysteine-tRNA ligase, C-terminal anti-codon recognition domain"/>
    <property type="match status" value="1"/>
</dbReference>
<dbReference type="Gene3D" id="3.40.50.620">
    <property type="entry name" value="HUPs"/>
    <property type="match status" value="1"/>
</dbReference>
<dbReference type="HAMAP" id="MF_00041">
    <property type="entry name" value="Cys_tRNA_synth"/>
    <property type="match status" value="1"/>
</dbReference>
<dbReference type="InterPro" id="IPR015803">
    <property type="entry name" value="Cys-tRNA-ligase"/>
</dbReference>
<dbReference type="InterPro" id="IPR015273">
    <property type="entry name" value="Cys-tRNA-synt_Ia_DALR"/>
</dbReference>
<dbReference type="InterPro" id="IPR024909">
    <property type="entry name" value="Cys-tRNA/MSH_ligase"/>
</dbReference>
<dbReference type="InterPro" id="IPR056411">
    <property type="entry name" value="CysS_C"/>
</dbReference>
<dbReference type="InterPro" id="IPR014729">
    <property type="entry name" value="Rossmann-like_a/b/a_fold"/>
</dbReference>
<dbReference type="InterPro" id="IPR032678">
    <property type="entry name" value="tRNA-synt_1_cat_dom"/>
</dbReference>
<dbReference type="InterPro" id="IPR009080">
    <property type="entry name" value="tRNAsynth_Ia_anticodon-bd"/>
</dbReference>
<dbReference type="NCBIfam" id="TIGR00435">
    <property type="entry name" value="cysS"/>
    <property type="match status" value="1"/>
</dbReference>
<dbReference type="PANTHER" id="PTHR10890:SF3">
    <property type="entry name" value="CYSTEINE--TRNA LIGASE, CYTOPLASMIC"/>
    <property type="match status" value="1"/>
</dbReference>
<dbReference type="PANTHER" id="PTHR10890">
    <property type="entry name" value="CYSTEINYL-TRNA SYNTHETASE"/>
    <property type="match status" value="1"/>
</dbReference>
<dbReference type="Pfam" id="PF23493">
    <property type="entry name" value="CysS_C"/>
    <property type="match status" value="1"/>
</dbReference>
<dbReference type="Pfam" id="PF09190">
    <property type="entry name" value="DALR_2"/>
    <property type="match status" value="1"/>
</dbReference>
<dbReference type="Pfam" id="PF01406">
    <property type="entry name" value="tRNA-synt_1e"/>
    <property type="match status" value="1"/>
</dbReference>
<dbReference type="PRINTS" id="PR00983">
    <property type="entry name" value="TRNASYNTHCYS"/>
</dbReference>
<dbReference type="SMART" id="SM00840">
    <property type="entry name" value="DALR_2"/>
    <property type="match status" value="1"/>
</dbReference>
<dbReference type="SUPFAM" id="SSF47323">
    <property type="entry name" value="Anticodon-binding domain of a subclass of class I aminoacyl-tRNA synthetases"/>
    <property type="match status" value="1"/>
</dbReference>
<dbReference type="SUPFAM" id="SSF52374">
    <property type="entry name" value="Nucleotidylyl transferase"/>
    <property type="match status" value="1"/>
</dbReference>
<keyword id="KW-0030">Aminoacyl-tRNA synthetase</keyword>
<keyword id="KW-0067">ATP-binding</keyword>
<keyword id="KW-0963">Cytoplasm</keyword>
<keyword id="KW-0436">Ligase</keyword>
<keyword id="KW-0479">Metal-binding</keyword>
<keyword id="KW-0547">Nucleotide-binding</keyword>
<keyword id="KW-0648">Protein biosynthesis</keyword>
<keyword id="KW-0862">Zinc</keyword>
<reference key="1">
    <citation type="submission" date="2006-12" db="EMBL/GenBank/DDBJ databases">
        <title>Complete sequence of Shewanella sp. W3-18-1.</title>
        <authorList>
            <consortium name="US DOE Joint Genome Institute"/>
            <person name="Copeland A."/>
            <person name="Lucas S."/>
            <person name="Lapidus A."/>
            <person name="Barry K."/>
            <person name="Detter J.C."/>
            <person name="Glavina del Rio T."/>
            <person name="Hammon N."/>
            <person name="Israni S."/>
            <person name="Dalin E."/>
            <person name="Tice H."/>
            <person name="Pitluck S."/>
            <person name="Chain P."/>
            <person name="Malfatti S."/>
            <person name="Shin M."/>
            <person name="Vergez L."/>
            <person name="Schmutz J."/>
            <person name="Larimer F."/>
            <person name="Land M."/>
            <person name="Hauser L."/>
            <person name="Kyrpides N."/>
            <person name="Lykidis A."/>
            <person name="Tiedje J."/>
            <person name="Richardson P."/>
        </authorList>
    </citation>
    <scope>NUCLEOTIDE SEQUENCE [LARGE SCALE GENOMIC DNA]</scope>
    <source>
        <strain>W3-18-1</strain>
    </source>
</reference>
<protein>
    <recommendedName>
        <fullName evidence="1">Cysteine--tRNA ligase</fullName>
        <ecNumber evidence="1">6.1.1.16</ecNumber>
    </recommendedName>
    <alternativeName>
        <fullName evidence="1">Cysteinyl-tRNA synthetase</fullName>
        <shortName evidence="1">CysRS</shortName>
    </alternativeName>
</protein>
<comment type="catalytic activity">
    <reaction evidence="1">
        <text>tRNA(Cys) + L-cysteine + ATP = L-cysteinyl-tRNA(Cys) + AMP + diphosphate</text>
        <dbReference type="Rhea" id="RHEA:17773"/>
        <dbReference type="Rhea" id="RHEA-COMP:9661"/>
        <dbReference type="Rhea" id="RHEA-COMP:9679"/>
        <dbReference type="ChEBI" id="CHEBI:30616"/>
        <dbReference type="ChEBI" id="CHEBI:33019"/>
        <dbReference type="ChEBI" id="CHEBI:35235"/>
        <dbReference type="ChEBI" id="CHEBI:78442"/>
        <dbReference type="ChEBI" id="CHEBI:78517"/>
        <dbReference type="ChEBI" id="CHEBI:456215"/>
        <dbReference type="EC" id="6.1.1.16"/>
    </reaction>
</comment>
<comment type="cofactor">
    <cofactor evidence="1">
        <name>Zn(2+)</name>
        <dbReference type="ChEBI" id="CHEBI:29105"/>
    </cofactor>
    <text evidence="1">Binds 1 zinc ion per subunit.</text>
</comment>
<comment type="subunit">
    <text evidence="1">Monomer.</text>
</comment>
<comment type="subcellular location">
    <subcellularLocation>
        <location evidence="1">Cytoplasm</location>
    </subcellularLocation>
</comment>
<comment type="similarity">
    <text evidence="1">Belongs to the class-I aminoacyl-tRNA synthetase family.</text>
</comment>
<gene>
    <name evidence="1" type="primary">cysS</name>
    <name type="ordered locus">Sputw3181_2614</name>
</gene>
<evidence type="ECO:0000255" key="1">
    <source>
        <dbReference type="HAMAP-Rule" id="MF_00041"/>
    </source>
</evidence>
<organism>
    <name type="scientific">Shewanella sp. (strain W3-18-1)</name>
    <dbReference type="NCBI Taxonomy" id="351745"/>
    <lineage>
        <taxon>Bacteria</taxon>
        <taxon>Pseudomonadati</taxon>
        <taxon>Pseudomonadota</taxon>
        <taxon>Gammaproteobacteria</taxon>
        <taxon>Alteromonadales</taxon>
        <taxon>Shewanellaceae</taxon>
        <taxon>Shewanella</taxon>
    </lineage>
</organism>
<name>SYC_SHESW</name>
<proteinExistence type="inferred from homology"/>
<accession>A1RL92</accession>
<sequence>MPMLKIYNSITRQKQEFKPINPGKIGMYVCGVTIYDLCHIGHGRTFVSFDMIVRYLRYVGYEVNFQRNITDVDDKIIKRANENNESCEALTERLIGEMHRDFDALNMLRPDFEPRATLHIAEIIDMVELLLARGHAYVASDGDVLFSVASYPDYGRLSGQNLDQLQAGARVEVDENKQNPMDFVLWKMSKPGEPTWESPWGPGRPGWHIECSAMNSKHLGLHFDIHGGGSDLQFPHHENEIAQSCCAHDTPYVNYWMHTGMVMVDREKMSKSLGNFFTIRDVLGHYDAETVRYFLLSGHYRSQLNYSEDNLKQARSALERLYTAIKDVDLTVAAAPAEEFIVKFKAAMDDDFNTPEAYSVLFDMVRDINRLKATDIAKASALAVAMKQLADVLGLLGQDPDAFFKGEGSDDEVAEIEALIVERNRARSEKDWPAADVARNRLNELGVVLEDGPSGTTWRKK</sequence>